<comment type="function">
    <text evidence="1">Cell wall formation.</text>
</comment>
<comment type="catalytic activity">
    <reaction evidence="1">
        <text>UDP-N-acetyl-alpha-D-muramate + L-alanine + ATP = UDP-N-acetyl-alpha-D-muramoyl-L-alanine + ADP + phosphate + H(+)</text>
        <dbReference type="Rhea" id="RHEA:23372"/>
        <dbReference type="ChEBI" id="CHEBI:15378"/>
        <dbReference type="ChEBI" id="CHEBI:30616"/>
        <dbReference type="ChEBI" id="CHEBI:43474"/>
        <dbReference type="ChEBI" id="CHEBI:57972"/>
        <dbReference type="ChEBI" id="CHEBI:70757"/>
        <dbReference type="ChEBI" id="CHEBI:83898"/>
        <dbReference type="ChEBI" id="CHEBI:456216"/>
        <dbReference type="EC" id="6.3.2.8"/>
    </reaction>
</comment>
<comment type="pathway">
    <text evidence="1">Cell wall biogenesis; peptidoglycan biosynthesis.</text>
</comment>
<comment type="subcellular location">
    <subcellularLocation>
        <location evidence="1">Cytoplasm</location>
    </subcellularLocation>
</comment>
<comment type="similarity">
    <text evidence="1">Belongs to the MurCDEF family.</text>
</comment>
<sequence length="444" mass="49890">MSKTYHFIGIKGSGMSALALMLHQMGHKVQGSDVEKYYFTQRGLEQAGITILPFDEKNLDGDMEIIAGNAFRPDNNVEIAYADQNGISYKRYHEFLGSFMRDFVSMGVAGAHGKTSTTGMLSHVLSHITDTSFLIGDGTGRGSANAKYFVFESDEYERHFMPYHPEYSIITNIDFDHPDYFTSLEDVFNAFNDYAKQITKGLFVYGEDAELRKITSDAPIYYYGFEAEGNDFVASDLIRSTTGSTFTVHFRGQNLGQFHIPTFGRHNIMNATAVIGLLYTAGFDLNLVREHLKTFSGVKRRFTEKIVNDTVIIDDFAHHPTEIIATLDAARQKYPSKEIVAVFQPHTFTRTIALLDDFAHALNQADAVYLAQIYGSAREVDHGDVKVEDLANKINKKHQVITVENVSPLLDHDNAVYVFMGAGDIQTYEYSFERLLSNLTSNVQ</sequence>
<name>MURC_STRZP</name>
<keyword id="KW-0067">ATP-binding</keyword>
<keyword id="KW-0131">Cell cycle</keyword>
<keyword id="KW-0132">Cell division</keyword>
<keyword id="KW-0133">Cell shape</keyword>
<keyword id="KW-0961">Cell wall biogenesis/degradation</keyword>
<keyword id="KW-0963">Cytoplasm</keyword>
<keyword id="KW-0436">Ligase</keyword>
<keyword id="KW-0547">Nucleotide-binding</keyword>
<keyword id="KW-0573">Peptidoglycan synthesis</keyword>
<reference key="1">
    <citation type="journal article" date="2010" name="Genome Biol.">
        <title>Structure and dynamics of the pan-genome of Streptococcus pneumoniae and closely related species.</title>
        <authorList>
            <person name="Donati C."/>
            <person name="Hiller N.L."/>
            <person name="Tettelin H."/>
            <person name="Muzzi A."/>
            <person name="Croucher N.J."/>
            <person name="Angiuoli S.V."/>
            <person name="Oggioni M."/>
            <person name="Dunning Hotopp J.C."/>
            <person name="Hu F.Z."/>
            <person name="Riley D.R."/>
            <person name="Covacci A."/>
            <person name="Mitchell T.J."/>
            <person name="Bentley S.D."/>
            <person name="Kilian M."/>
            <person name="Ehrlich G.D."/>
            <person name="Rappuoli R."/>
            <person name="Moxon E.R."/>
            <person name="Masignani V."/>
        </authorList>
    </citation>
    <scope>NUCLEOTIDE SEQUENCE [LARGE SCALE GENOMIC DNA]</scope>
    <source>
        <strain>P1031</strain>
    </source>
</reference>
<proteinExistence type="inferred from homology"/>
<dbReference type="EC" id="6.3.2.8" evidence="1"/>
<dbReference type="EMBL" id="CP000920">
    <property type="protein sequence ID" value="ACO20934.1"/>
    <property type="molecule type" value="Genomic_DNA"/>
</dbReference>
<dbReference type="RefSeq" id="WP_000048087.1">
    <property type="nucleotide sequence ID" value="NC_012467.1"/>
</dbReference>
<dbReference type="SMR" id="C1CLL9"/>
<dbReference type="GeneID" id="45653240"/>
<dbReference type="KEGG" id="spp:SPP_1541"/>
<dbReference type="HOGENOM" id="CLU_028104_1_0_9"/>
<dbReference type="UniPathway" id="UPA00219"/>
<dbReference type="GO" id="GO:0005737">
    <property type="term" value="C:cytoplasm"/>
    <property type="evidence" value="ECO:0007669"/>
    <property type="project" value="UniProtKB-SubCell"/>
</dbReference>
<dbReference type="GO" id="GO:0005524">
    <property type="term" value="F:ATP binding"/>
    <property type="evidence" value="ECO:0007669"/>
    <property type="project" value="UniProtKB-UniRule"/>
</dbReference>
<dbReference type="GO" id="GO:0008763">
    <property type="term" value="F:UDP-N-acetylmuramate-L-alanine ligase activity"/>
    <property type="evidence" value="ECO:0007669"/>
    <property type="project" value="UniProtKB-UniRule"/>
</dbReference>
<dbReference type="GO" id="GO:0051301">
    <property type="term" value="P:cell division"/>
    <property type="evidence" value="ECO:0007669"/>
    <property type="project" value="UniProtKB-KW"/>
</dbReference>
<dbReference type="GO" id="GO:0071555">
    <property type="term" value="P:cell wall organization"/>
    <property type="evidence" value="ECO:0007669"/>
    <property type="project" value="UniProtKB-KW"/>
</dbReference>
<dbReference type="GO" id="GO:0009252">
    <property type="term" value="P:peptidoglycan biosynthetic process"/>
    <property type="evidence" value="ECO:0007669"/>
    <property type="project" value="UniProtKB-UniRule"/>
</dbReference>
<dbReference type="GO" id="GO:0008360">
    <property type="term" value="P:regulation of cell shape"/>
    <property type="evidence" value="ECO:0007669"/>
    <property type="project" value="UniProtKB-KW"/>
</dbReference>
<dbReference type="Gene3D" id="3.90.190.20">
    <property type="entry name" value="Mur ligase, C-terminal domain"/>
    <property type="match status" value="1"/>
</dbReference>
<dbReference type="Gene3D" id="3.40.1190.10">
    <property type="entry name" value="Mur-like, catalytic domain"/>
    <property type="match status" value="1"/>
</dbReference>
<dbReference type="Gene3D" id="3.40.50.720">
    <property type="entry name" value="NAD(P)-binding Rossmann-like Domain"/>
    <property type="match status" value="1"/>
</dbReference>
<dbReference type="HAMAP" id="MF_00046">
    <property type="entry name" value="MurC"/>
    <property type="match status" value="1"/>
</dbReference>
<dbReference type="InterPro" id="IPR036565">
    <property type="entry name" value="Mur-like_cat_sf"/>
</dbReference>
<dbReference type="InterPro" id="IPR004101">
    <property type="entry name" value="Mur_ligase_C"/>
</dbReference>
<dbReference type="InterPro" id="IPR036615">
    <property type="entry name" value="Mur_ligase_C_dom_sf"/>
</dbReference>
<dbReference type="InterPro" id="IPR013221">
    <property type="entry name" value="Mur_ligase_cen"/>
</dbReference>
<dbReference type="InterPro" id="IPR000713">
    <property type="entry name" value="Mur_ligase_N"/>
</dbReference>
<dbReference type="InterPro" id="IPR050061">
    <property type="entry name" value="MurCDEF_pg_biosynth"/>
</dbReference>
<dbReference type="InterPro" id="IPR005758">
    <property type="entry name" value="UDP-N-AcMur_Ala_ligase_MurC"/>
</dbReference>
<dbReference type="NCBIfam" id="TIGR01082">
    <property type="entry name" value="murC"/>
    <property type="match status" value="1"/>
</dbReference>
<dbReference type="PANTHER" id="PTHR43445:SF3">
    <property type="entry name" value="UDP-N-ACETYLMURAMATE--L-ALANINE LIGASE"/>
    <property type="match status" value="1"/>
</dbReference>
<dbReference type="PANTHER" id="PTHR43445">
    <property type="entry name" value="UDP-N-ACETYLMURAMATE--L-ALANINE LIGASE-RELATED"/>
    <property type="match status" value="1"/>
</dbReference>
<dbReference type="Pfam" id="PF01225">
    <property type="entry name" value="Mur_ligase"/>
    <property type="match status" value="1"/>
</dbReference>
<dbReference type="Pfam" id="PF02875">
    <property type="entry name" value="Mur_ligase_C"/>
    <property type="match status" value="1"/>
</dbReference>
<dbReference type="Pfam" id="PF08245">
    <property type="entry name" value="Mur_ligase_M"/>
    <property type="match status" value="1"/>
</dbReference>
<dbReference type="SUPFAM" id="SSF51984">
    <property type="entry name" value="MurCD N-terminal domain"/>
    <property type="match status" value="1"/>
</dbReference>
<dbReference type="SUPFAM" id="SSF53623">
    <property type="entry name" value="MurD-like peptide ligases, catalytic domain"/>
    <property type="match status" value="1"/>
</dbReference>
<dbReference type="SUPFAM" id="SSF53244">
    <property type="entry name" value="MurD-like peptide ligases, peptide-binding domain"/>
    <property type="match status" value="1"/>
</dbReference>
<evidence type="ECO:0000255" key="1">
    <source>
        <dbReference type="HAMAP-Rule" id="MF_00046"/>
    </source>
</evidence>
<organism>
    <name type="scientific">Streptococcus pneumoniae (strain P1031)</name>
    <dbReference type="NCBI Taxonomy" id="488223"/>
    <lineage>
        <taxon>Bacteria</taxon>
        <taxon>Bacillati</taxon>
        <taxon>Bacillota</taxon>
        <taxon>Bacilli</taxon>
        <taxon>Lactobacillales</taxon>
        <taxon>Streptococcaceae</taxon>
        <taxon>Streptococcus</taxon>
    </lineage>
</organism>
<feature type="chain" id="PRO_1000192116" description="UDP-N-acetylmuramate--L-alanine ligase">
    <location>
        <begin position="1"/>
        <end position="444"/>
    </location>
</feature>
<feature type="binding site" evidence="1">
    <location>
        <begin position="110"/>
        <end position="116"/>
    </location>
    <ligand>
        <name>ATP</name>
        <dbReference type="ChEBI" id="CHEBI:30616"/>
    </ligand>
</feature>
<gene>
    <name evidence="1" type="primary">murC</name>
    <name type="ordered locus">SPP_1541</name>
</gene>
<protein>
    <recommendedName>
        <fullName evidence="1">UDP-N-acetylmuramate--L-alanine ligase</fullName>
        <ecNumber evidence="1">6.3.2.8</ecNumber>
    </recommendedName>
    <alternativeName>
        <fullName evidence="1">UDP-N-acetylmuramoyl-L-alanine synthetase</fullName>
    </alternativeName>
</protein>
<accession>C1CLL9</accession>